<sequence>MSTITKDQILEGVAALSVMEIVELISAMEEKFGVSAAAVAAGPAAAVAAGPAAAVEAAEEQTEFDVVLASFGENKVAVIKAVRGATGLGLKEAKDLVESAPAVLKEGVNKDEAETLKKSLEEAGASVEIK</sequence>
<reference key="1">
    <citation type="journal article" date="2010" name="J. Bacteriol.">
        <title>Genome sequence of the deep-rooted Yersinia pestis strain Angola reveals new insights into the evolution and pangenome of the plague bacterium.</title>
        <authorList>
            <person name="Eppinger M."/>
            <person name="Worsham P.L."/>
            <person name="Nikolich M.P."/>
            <person name="Riley D.R."/>
            <person name="Sebastian Y."/>
            <person name="Mou S."/>
            <person name="Achtman M."/>
            <person name="Lindler L.E."/>
            <person name="Ravel J."/>
        </authorList>
    </citation>
    <scope>NUCLEOTIDE SEQUENCE [LARGE SCALE GENOMIC DNA]</scope>
    <source>
        <strain>Angola</strain>
    </source>
</reference>
<name>RL7_YERPG</name>
<comment type="function">
    <text evidence="1">Forms part of the ribosomal stalk which helps the ribosome interact with GTP-bound translation factors. Is thus essential for accurate translation.</text>
</comment>
<comment type="subunit">
    <text evidence="1">Homodimer. Part of the ribosomal stalk of the 50S ribosomal subunit. Forms a multimeric L10(L12)X complex, where L10 forms an elongated spine to which 2 to 4 L12 dimers bind in a sequential fashion. Binds GTP-bound translation factors.</text>
</comment>
<comment type="similarity">
    <text evidence="1">Belongs to the bacterial ribosomal protein bL12 family.</text>
</comment>
<protein>
    <recommendedName>
        <fullName evidence="1">Large ribosomal subunit protein bL12</fullName>
    </recommendedName>
    <alternativeName>
        <fullName evidence="2">50S ribosomal protein L7/L12</fullName>
    </alternativeName>
</protein>
<gene>
    <name evidence="1" type="primary">rplL</name>
    <name type="ordered locus">YpAngola_A2809</name>
</gene>
<dbReference type="EMBL" id="CP000901">
    <property type="protein sequence ID" value="ABX86107.1"/>
    <property type="molecule type" value="Genomic_DNA"/>
</dbReference>
<dbReference type="RefSeq" id="WP_002230058.1">
    <property type="nucleotide sequence ID" value="NZ_CP009935.1"/>
</dbReference>
<dbReference type="SMR" id="A9R0H7"/>
<dbReference type="KEGG" id="ypg:YpAngola_A2809"/>
<dbReference type="PATRIC" id="fig|349746.12.peg.3842"/>
<dbReference type="GO" id="GO:0022625">
    <property type="term" value="C:cytosolic large ribosomal subunit"/>
    <property type="evidence" value="ECO:0007669"/>
    <property type="project" value="TreeGrafter"/>
</dbReference>
<dbReference type="GO" id="GO:0003729">
    <property type="term" value="F:mRNA binding"/>
    <property type="evidence" value="ECO:0007669"/>
    <property type="project" value="TreeGrafter"/>
</dbReference>
<dbReference type="GO" id="GO:0003735">
    <property type="term" value="F:structural constituent of ribosome"/>
    <property type="evidence" value="ECO:0007669"/>
    <property type="project" value="InterPro"/>
</dbReference>
<dbReference type="GO" id="GO:0006412">
    <property type="term" value="P:translation"/>
    <property type="evidence" value="ECO:0007669"/>
    <property type="project" value="UniProtKB-UniRule"/>
</dbReference>
<dbReference type="CDD" id="cd00387">
    <property type="entry name" value="Ribosomal_L7_L12"/>
    <property type="match status" value="1"/>
</dbReference>
<dbReference type="FunFam" id="3.30.1390.10:FF:000001">
    <property type="entry name" value="50S ribosomal protein L7/L12"/>
    <property type="match status" value="1"/>
</dbReference>
<dbReference type="Gene3D" id="3.30.1390.10">
    <property type="match status" value="1"/>
</dbReference>
<dbReference type="Gene3D" id="1.20.5.710">
    <property type="entry name" value="Single helix bin"/>
    <property type="match status" value="1"/>
</dbReference>
<dbReference type="HAMAP" id="MF_00368">
    <property type="entry name" value="Ribosomal_bL12"/>
    <property type="match status" value="1"/>
</dbReference>
<dbReference type="InterPro" id="IPR000206">
    <property type="entry name" value="Ribosomal_bL12"/>
</dbReference>
<dbReference type="InterPro" id="IPR013823">
    <property type="entry name" value="Ribosomal_bL12_C"/>
</dbReference>
<dbReference type="InterPro" id="IPR014719">
    <property type="entry name" value="Ribosomal_bL12_C/ClpS-like"/>
</dbReference>
<dbReference type="InterPro" id="IPR008932">
    <property type="entry name" value="Ribosomal_bL12_oligo"/>
</dbReference>
<dbReference type="InterPro" id="IPR036235">
    <property type="entry name" value="Ribosomal_bL12_oligo_N_sf"/>
</dbReference>
<dbReference type="NCBIfam" id="TIGR00855">
    <property type="entry name" value="L12"/>
    <property type="match status" value="1"/>
</dbReference>
<dbReference type="PANTHER" id="PTHR45987">
    <property type="entry name" value="39S RIBOSOMAL PROTEIN L12"/>
    <property type="match status" value="1"/>
</dbReference>
<dbReference type="PANTHER" id="PTHR45987:SF4">
    <property type="entry name" value="LARGE RIBOSOMAL SUBUNIT PROTEIN BL12M"/>
    <property type="match status" value="1"/>
</dbReference>
<dbReference type="Pfam" id="PF00542">
    <property type="entry name" value="Ribosomal_L12"/>
    <property type="match status" value="1"/>
</dbReference>
<dbReference type="Pfam" id="PF16320">
    <property type="entry name" value="Ribosomal_L12_N"/>
    <property type="match status" value="1"/>
</dbReference>
<dbReference type="SUPFAM" id="SSF54736">
    <property type="entry name" value="ClpS-like"/>
    <property type="match status" value="1"/>
</dbReference>
<dbReference type="SUPFAM" id="SSF48300">
    <property type="entry name" value="Ribosomal protein L7/12, oligomerisation (N-terminal) domain"/>
    <property type="match status" value="1"/>
</dbReference>
<keyword id="KW-0687">Ribonucleoprotein</keyword>
<keyword id="KW-0689">Ribosomal protein</keyword>
<proteinExistence type="inferred from homology"/>
<accession>A9R0H7</accession>
<evidence type="ECO:0000255" key="1">
    <source>
        <dbReference type="HAMAP-Rule" id="MF_00368"/>
    </source>
</evidence>
<evidence type="ECO:0000305" key="2"/>
<organism>
    <name type="scientific">Yersinia pestis bv. Antiqua (strain Angola)</name>
    <dbReference type="NCBI Taxonomy" id="349746"/>
    <lineage>
        <taxon>Bacteria</taxon>
        <taxon>Pseudomonadati</taxon>
        <taxon>Pseudomonadota</taxon>
        <taxon>Gammaproteobacteria</taxon>
        <taxon>Enterobacterales</taxon>
        <taxon>Yersiniaceae</taxon>
        <taxon>Yersinia</taxon>
    </lineage>
</organism>
<feature type="chain" id="PRO_1000121512" description="Large ribosomal subunit protein bL12">
    <location>
        <begin position="1"/>
        <end position="130"/>
    </location>
</feature>